<proteinExistence type="inferred from homology"/>
<feature type="chain" id="PRO_1000120621" description="Small ribosomal subunit protein bS21">
    <location>
        <begin position="1"/>
        <end position="71"/>
    </location>
</feature>
<feature type="region of interest" description="Disordered" evidence="2">
    <location>
        <begin position="43"/>
        <end position="71"/>
    </location>
</feature>
<feature type="compositionally biased region" description="Basic residues" evidence="2">
    <location>
        <begin position="46"/>
        <end position="59"/>
    </location>
</feature>
<feature type="compositionally biased region" description="Basic and acidic residues" evidence="2">
    <location>
        <begin position="60"/>
        <end position="71"/>
    </location>
</feature>
<gene>
    <name evidence="1" type="primary">rpsU</name>
    <name type="ordered locus">ETA_04170</name>
</gene>
<accession>B2VGJ7</accession>
<organism>
    <name type="scientific">Erwinia tasmaniensis (strain DSM 17950 / CFBP 7177 / CIP 109463 / NCPPB 4357 / Et1/99)</name>
    <dbReference type="NCBI Taxonomy" id="465817"/>
    <lineage>
        <taxon>Bacteria</taxon>
        <taxon>Pseudomonadati</taxon>
        <taxon>Pseudomonadota</taxon>
        <taxon>Gammaproteobacteria</taxon>
        <taxon>Enterobacterales</taxon>
        <taxon>Erwiniaceae</taxon>
        <taxon>Erwinia</taxon>
    </lineage>
</organism>
<reference key="1">
    <citation type="journal article" date="2008" name="Environ. Microbiol.">
        <title>The genome of Erwinia tasmaniensis strain Et1/99, a non-pathogenic bacterium in the genus Erwinia.</title>
        <authorList>
            <person name="Kube M."/>
            <person name="Migdoll A.M."/>
            <person name="Mueller I."/>
            <person name="Kuhl H."/>
            <person name="Beck A."/>
            <person name="Reinhardt R."/>
            <person name="Geider K."/>
        </authorList>
    </citation>
    <scope>NUCLEOTIDE SEQUENCE [LARGE SCALE GENOMIC DNA]</scope>
    <source>
        <strain>DSM 17950 / CFBP 7177 / CIP 109463 / NCPPB 4357 / Et1/99</strain>
    </source>
</reference>
<sequence>MPVIKVRENEPFDVALRRFKRSCEKAGVLAEVRRREFYEKPTTERKRAKASAVKRHAKKLARENARRTRLY</sequence>
<comment type="similarity">
    <text evidence="1">Belongs to the bacterial ribosomal protein bS21 family.</text>
</comment>
<keyword id="KW-1185">Reference proteome</keyword>
<keyword id="KW-0687">Ribonucleoprotein</keyword>
<keyword id="KW-0689">Ribosomal protein</keyword>
<protein>
    <recommendedName>
        <fullName evidence="1">Small ribosomal subunit protein bS21</fullName>
    </recommendedName>
    <alternativeName>
        <fullName evidence="3">30S ribosomal protein S21</fullName>
    </alternativeName>
</protein>
<name>RS21_ERWT9</name>
<dbReference type="EMBL" id="CU468135">
    <property type="protein sequence ID" value="CAO95463.1"/>
    <property type="molecule type" value="Genomic_DNA"/>
</dbReference>
<dbReference type="RefSeq" id="WP_001144069.1">
    <property type="nucleotide sequence ID" value="NC_010694.1"/>
</dbReference>
<dbReference type="SMR" id="B2VGJ7"/>
<dbReference type="STRING" id="465817.ETA_04170"/>
<dbReference type="GeneID" id="98390195"/>
<dbReference type="KEGG" id="eta:ETA_04170"/>
<dbReference type="eggNOG" id="COG0828">
    <property type="taxonomic scope" value="Bacteria"/>
</dbReference>
<dbReference type="HOGENOM" id="CLU_159258_1_0_6"/>
<dbReference type="OrthoDB" id="9799244at2"/>
<dbReference type="Proteomes" id="UP000001726">
    <property type="component" value="Chromosome"/>
</dbReference>
<dbReference type="GO" id="GO:1990904">
    <property type="term" value="C:ribonucleoprotein complex"/>
    <property type="evidence" value="ECO:0007669"/>
    <property type="project" value="UniProtKB-KW"/>
</dbReference>
<dbReference type="GO" id="GO:0005840">
    <property type="term" value="C:ribosome"/>
    <property type="evidence" value="ECO:0007669"/>
    <property type="project" value="UniProtKB-KW"/>
</dbReference>
<dbReference type="GO" id="GO:0003735">
    <property type="term" value="F:structural constituent of ribosome"/>
    <property type="evidence" value="ECO:0007669"/>
    <property type="project" value="InterPro"/>
</dbReference>
<dbReference type="GO" id="GO:0006412">
    <property type="term" value="P:translation"/>
    <property type="evidence" value="ECO:0007669"/>
    <property type="project" value="UniProtKB-UniRule"/>
</dbReference>
<dbReference type="FunFam" id="1.20.5.1150:FF:000001">
    <property type="entry name" value="30S ribosomal protein S21"/>
    <property type="match status" value="1"/>
</dbReference>
<dbReference type="Gene3D" id="1.20.5.1150">
    <property type="entry name" value="Ribosomal protein S8"/>
    <property type="match status" value="1"/>
</dbReference>
<dbReference type="HAMAP" id="MF_00358">
    <property type="entry name" value="Ribosomal_bS21"/>
    <property type="match status" value="1"/>
</dbReference>
<dbReference type="InterPro" id="IPR001911">
    <property type="entry name" value="Ribosomal_bS21"/>
</dbReference>
<dbReference type="InterPro" id="IPR018278">
    <property type="entry name" value="Ribosomal_bS21_CS"/>
</dbReference>
<dbReference type="InterPro" id="IPR038380">
    <property type="entry name" value="Ribosomal_bS21_sf"/>
</dbReference>
<dbReference type="NCBIfam" id="TIGR00030">
    <property type="entry name" value="S21p"/>
    <property type="match status" value="1"/>
</dbReference>
<dbReference type="PANTHER" id="PTHR21109">
    <property type="entry name" value="MITOCHONDRIAL 28S RIBOSOMAL PROTEIN S21"/>
    <property type="match status" value="1"/>
</dbReference>
<dbReference type="PANTHER" id="PTHR21109:SF22">
    <property type="entry name" value="SMALL RIBOSOMAL SUBUNIT PROTEIN BS21"/>
    <property type="match status" value="1"/>
</dbReference>
<dbReference type="Pfam" id="PF01165">
    <property type="entry name" value="Ribosomal_S21"/>
    <property type="match status" value="1"/>
</dbReference>
<dbReference type="PRINTS" id="PR00976">
    <property type="entry name" value="RIBOSOMALS21"/>
</dbReference>
<dbReference type="PROSITE" id="PS01181">
    <property type="entry name" value="RIBOSOMAL_S21"/>
    <property type="match status" value="1"/>
</dbReference>
<evidence type="ECO:0000255" key="1">
    <source>
        <dbReference type="HAMAP-Rule" id="MF_00358"/>
    </source>
</evidence>
<evidence type="ECO:0000256" key="2">
    <source>
        <dbReference type="SAM" id="MobiDB-lite"/>
    </source>
</evidence>
<evidence type="ECO:0000305" key="3"/>